<sequence length="254" mass="27745">MLPFGLVAALLLAAGPRPSLGDEAIHCPPCSEEKLARCRPPVGCEELVREPGCGCCATCALGLGMPCGVYTPRCGSGMRCYPPRGVEKPLRTLMHGQGVCTELSEIEAIQESLQTSDKDESEHPNNSFNPCSAHDHRCLQKHMAKVRDRSKMKVVGTPREEPRPVPQGSCQSELHRALERLAASQSRTHEDLFIIPIPNCDRNGNFHPKQCHPALDGQRGKCWCVDRKTGVKLPGGLEPKGELDCHQLADSLQE</sequence>
<reference key="1">
    <citation type="journal article" date="1990" name="Mol. Endocrinol.">
        <title>Molecular cloning of the cDNAs encoding a novel insulin-like growth factor-binding protein from rat and human.</title>
        <authorList>
            <person name="Shimasaki S."/>
            <person name="Uchiyama F."/>
            <person name="Shimonaka M."/>
            <person name="Ling N."/>
        </authorList>
    </citation>
    <scope>NUCLEOTIDE SEQUENCE [GENOMIC DNA]</scope>
</reference>
<reference key="2">
    <citation type="journal article" date="1993" name="Biochem. Biophys. Res. Commun.">
        <title>Structure of the rat insulin-like growth factor binding protein-4 gene.</title>
        <authorList>
            <person name="Gao L."/>
            <person name="Ling N."/>
            <person name="Shimasaki S."/>
        </authorList>
    </citation>
    <scope>NUCLEOTIDE SEQUENCE [GENOMIC DNA]</scope>
    <source>
        <strain>Sprague-Dawley</strain>
    </source>
</reference>
<reference key="3">
    <citation type="submission" date="2004-07" db="EMBL/GenBank/DDBJ databases">
        <title>IGFBP3, 4, 5 and 6 expression at the mandibular condylar cartilage during rat growth and development.</title>
        <authorList>
            <person name="Hajjar D."/>
            <person name="Ricarte-Filho J.C.M."/>
            <person name="dos Santos M.F."/>
            <person name="Kimura E.T."/>
        </authorList>
    </citation>
    <scope>NUCLEOTIDE SEQUENCE [MRNA]</scope>
    <source>
        <strain>Wistar</strain>
        <tissue>Mandibular condyle</tissue>
    </source>
</reference>
<reference key="4">
    <citation type="journal article" date="2004" name="Genome Res.">
        <title>The status, quality, and expansion of the NIH full-length cDNA project: the Mammalian Gene Collection (MGC).</title>
        <authorList>
            <consortium name="The MGC Project Team"/>
        </authorList>
    </citation>
    <scope>NUCLEOTIDE SEQUENCE [LARGE SCALE MRNA]</scope>
    <source>
        <tissue>Liver</tissue>
    </source>
</reference>
<reference key="5">
    <citation type="journal article" date="1989" name="Biochem. Biophys. Res. Commun.">
        <title>Identification of a novel binding protein for insulin-like growth factors in adult rat serum.</title>
        <authorList>
            <person name="Shimonaka M."/>
            <person name="Schroeder R."/>
            <person name="Shimasaki S."/>
            <person name="Ling N."/>
        </authorList>
    </citation>
    <scope>PROTEIN SEQUENCE OF 22-61</scope>
    <source>
        <tissue>Serum</tissue>
    </source>
</reference>
<reference key="6">
    <citation type="journal article" date="2001" name="J. Endocrinol.">
        <title>Expression, purification and characterization of the structure and disulfide linkages of insulin-like growth factor binding protein-4.</title>
        <authorList>
            <person name="Chelius D."/>
            <person name="Baldwin M.A."/>
            <person name="Lu X."/>
            <person name="Spencer E.M."/>
        </authorList>
    </citation>
    <scope>DISULFIDE BONDS</scope>
</reference>
<accession>P21744</accession>
<accession>Q68J74</accession>
<comment type="function">
    <text>IGF-binding proteins prolong the half-life of the IGFs and have been shown to either inhibit or stimulate the growth promoting effects of the IGFs on cell culture. They alter the interaction of IGFs with their cell surface receptors.</text>
</comment>
<comment type="subunit">
    <text>Binds IGF2 more than IGF1.</text>
</comment>
<comment type="subcellular location">
    <subcellularLocation>
        <location>Secreted</location>
    </subcellularLocation>
</comment>
<organism>
    <name type="scientific">Rattus norvegicus</name>
    <name type="common">Rat</name>
    <dbReference type="NCBI Taxonomy" id="10116"/>
    <lineage>
        <taxon>Eukaryota</taxon>
        <taxon>Metazoa</taxon>
        <taxon>Chordata</taxon>
        <taxon>Craniata</taxon>
        <taxon>Vertebrata</taxon>
        <taxon>Euteleostomi</taxon>
        <taxon>Mammalia</taxon>
        <taxon>Eutheria</taxon>
        <taxon>Euarchontoglires</taxon>
        <taxon>Glires</taxon>
        <taxon>Rodentia</taxon>
        <taxon>Myomorpha</taxon>
        <taxon>Muroidea</taxon>
        <taxon>Muridae</taxon>
        <taxon>Murinae</taxon>
        <taxon>Rattus</taxon>
    </lineage>
</organism>
<feature type="signal peptide" evidence="7">
    <location>
        <begin position="1"/>
        <end position="21"/>
    </location>
</feature>
<feature type="chain" id="PRO_0000014384" description="Insulin-like growth factor-binding protein 4">
    <location>
        <begin position="22"/>
        <end position="254"/>
    </location>
</feature>
<feature type="domain" description="IGFBP N-terminal" evidence="4">
    <location>
        <begin position="23"/>
        <end position="103"/>
    </location>
</feature>
<feature type="domain" description="Thyroglobulin type-1" evidence="3">
    <location>
        <begin position="167"/>
        <end position="245"/>
    </location>
</feature>
<feature type="region of interest" description="Disordered" evidence="5">
    <location>
        <begin position="149"/>
        <end position="169"/>
    </location>
</feature>
<feature type="modified residue" description="Phosphoserine" evidence="1">
    <location>
        <position position="251"/>
    </location>
</feature>
<feature type="glycosylation site" description="N-linked (GlcNAc...) asparagine" evidence="2">
    <location>
        <position position="125"/>
    </location>
</feature>
<feature type="disulfide bond" evidence="4">
    <location>
        <begin position="27"/>
        <end position="53"/>
    </location>
</feature>
<feature type="disulfide bond" evidence="4">
    <location>
        <begin position="30"/>
        <end position="55"/>
    </location>
</feature>
<feature type="disulfide bond" evidence="4 6">
    <location>
        <begin position="38"/>
        <end position="56"/>
    </location>
</feature>
<feature type="disulfide bond" evidence="4 6">
    <location>
        <begin position="44"/>
        <end position="59"/>
    </location>
</feature>
<feature type="disulfide bond" evidence="4 6">
    <location>
        <begin position="67"/>
        <end position="80"/>
    </location>
</feature>
<feature type="disulfide bond" evidence="4 6">
    <location>
        <begin position="74"/>
        <end position="100"/>
    </location>
</feature>
<feature type="disulfide bond" evidence="3 6">
    <location>
        <begin position="131"/>
        <end position="138"/>
    </location>
</feature>
<feature type="disulfide bond" evidence="3 6">
    <location>
        <begin position="170"/>
        <end position="200"/>
    </location>
</feature>
<feature type="disulfide bond" evidence="3 6">
    <location>
        <begin position="211"/>
        <end position="222"/>
    </location>
</feature>
<feature type="disulfide bond" evidence="3 6">
    <location>
        <begin position="224"/>
        <end position="245"/>
    </location>
</feature>
<keyword id="KW-0903">Direct protein sequencing</keyword>
<keyword id="KW-1015">Disulfide bond</keyword>
<keyword id="KW-0325">Glycoprotein</keyword>
<keyword id="KW-0340">Growth factor binding</keyword>
<keyword id="KW-0597">Phosphoprotein</keyword>
<keyword id="KW-1185">Reference proteome</keyword>
<keyword id="KW-0964">Secreted</keyword>
<keyword id="KW-0732">Signal</keyword>
<evidence type="ECO:0000250" key="1">
    <source>
        <dbReference type="UniProtKB" id="P22692"/>
    </source>
</evidence>
<evidence type="ECO:0000255" key="2"/>
<evidence type="ECO:0000255" key="3">
    <source>
        <dbReference type="PROSITE-ProRule" id="PRU00500"/>
    </source>
</evidence>
<evidence type="ECO:0000255" key="4">
    <source>
        <dbReference type="PROSITE-ProRule" id="PRU00653"/>
    </source>
</evidence>
<evidence type="ECO:0000256" key="5">
    <source>
        <dbReference type="SAM" id="MobiDB-lite"/>
    </source>
</evidence>
<evidence type="ECO:0000269" key="6">
    <source>
    </source>
</evidence>
<evidence type="ECO:0000269" key="7">
    <source>
    </source>
</evidence>
<gene>
    <name type="primary">Igfbp4</name>
    <name type="synonym">Igfbp-4</name>
</gene>
<dbReference type="EMBL" id="L08276">
    <property type="status" value="NOT_ANNOTATED_CDS"/>
    <property type="molecule type" value="Genomic_DNA"/>
</dbReference>
<dbReference type="EMBL" id="AY686592">
    <property type="protein sequence ID" value="AAT96376.1"/>
    <property type="molecule type" value="mRNA"/>
</dbReference>
<dbReference type="EMBL" id="BC098750">
    <property type="protein sequence ID" value="AAH98750.1"/>
    <property type="molecule type" value="mRNA"/>
</dbReference>
<dbReference type="PIR" id="JC1464">
    <property type="entry name" value="JC1464"/>
</dbReference>
<dbReference type="RefSeq" id="NP_001004274.1">
    <property type="nucleotide sequence ID" value="NM_001004274.2"/>
</dbReference>
<dbReference type="SMR" id="P21744"/>
<dbReference type="BioGRID" id="262076">
    <property type="interactions" value="2"/>
</dbReference>
<dbReference type="FunCoup" id="P21744">
    <property type="interactions" value="108"/>
</dbReference>
<dbReference type="STRING" id="10116.ENSRNOP00000014153"/>
<dbReference type="MEROPS" id="I31.952"/>
<dbReference type="GlyCosmos" id="P21744">
    <property type="glycosylation" value="1 site, No reported glycans"/>
</dbReference>
<dbReference type="GlyGen" id="P21744">
    <property type="glycosylation" value="1 site"/>
</dbReference>
<dbReference type="PhosphoSitePlus" id="P21744"/>
<dbReference type="PaxDb" id="10116-ENSRNOP00000014153"/>
<dbReference type="Ensembl" id="ENSRNOT00000014153.8">
    <property type="protein sequence ID" value="ENSRNOP00000014153.5"/>
    <property type="gene ID" value="ENSRNOG00000010635.8"/>
</dbReference>
<dbReference type="GeneID" id="360622"/>
<dbReference type="KEGG" id="rno:360622"/>
<dbReference type="UCSC" id="RGD:2875">
    <property type="organism name" value="rat"/>
</dbReference>
<dbReference type="AGR" id="RGD:2875"/>
<dbReference type="CTD" id="3487"/>
<dbReference type="RGD" id="2875">
    <property type="gene designation" value="Igfbp4"/>
</dbReference>
<dbReference type="eggNOG" id="ENOG502QTC8">
    <property type="taxonomic scope" value="Eukaryota"/>
</dbReference>
<dbReference type="GeneTree" id="ENSGT00940000159647"/>
<dbReference type="HOGENOM" id="CLU_070833_3_0_1"/>
<dbReference type="InParanoid" id="P21744"/>
<dbReference type="OMA" id="QEPGCGC"/>
<dbReference type="OrthoDB" id="8477465at2759"/>
<dbReference type="PhylomeDB" id="P21744"/>
<dbReference type="TreeFam" id="TF331211"/>
<dbReference type="Reactome" id="R-RNO-381426">
    <property type="pathway name" value="Regulation of Insulin-like Growth Factor (IGF) transport and uptake by Insulin-like Growth Factor Binding Proteins (IGFBPs)"/>
</dbReference>
<dbReference type="Reactome" id="R-RNO-8957275">
    <property type="pathway name" value="Post-translational protein phosphorylation"/>
</dbReference>
<dbReference type="PRO" id="PR:P21744"/>
<dbReference type="Proteomes" id="UP000002494">
    <property type="component" value="Chromosome 10"/>
</dbReference>
<dbReference type="Bgee" id="ENSRNOG00000010635">
    <property type="expression patterns" value="Expressed in liver and 19 other cell types or tissues"/>
</dbReference>
<dbReference type="GO" id="GO:0005615">
    <property type="term" value="C:extracellular space"/>
    <property type="evidence" value="ECO:0000266"/>
    <property type="project" value="RGD"/>
</dbReference>
<dbReference type="GO" id="GO:0005520">
    <property type="term" value="F:insulin-like growth factor binding"/>
    <property type="evidence" value="ECO:0000266"/>
    <property type="project" value="RGD"/>
</dbReference>
<dbReference type="GO" id="GO:0031994">
    <property type="term" value="F:insulin-like growth factor I binding"/>
    <property type="evidence" value="ECO:0000318"/>
    <property type="project" value="GO_Central"/>
</dbReference>
<dbReference type="GO" id="GO:0031995">
    <property type="term" value="F:insulin-like growth factor II binding"/>
    <property type="evidence" value="ECO:0000318"/>
    <property type="project" value="GO_Central"/>
</dbReference>
<dbReference type="GO" id="GO:0035556">
    <property type="term" value="P:intracellular signal transduction"/>
    <property type="evidence" value="ECO:0000304"/>
    <property type="project" value="RGD"/>
</dbReference>
<dbReference type="GO" id="GO:0000165">
    <property type="term" value="P:MAPK cascade"/>
    <property type="evidence" value="ECO:0000266"/>
    <property type="project" value="RGD"/>
</dbReference>
<dbReference type="GO" id="GO:0043568">
    <property type="term" value="P:positive regulation of insulin-like growth factor receptor signaling pathway"/>
    <property type="evidence" value="ECO:0000266"/>
    <property type="project" value="RGD"/>
</dbReference>
<dbReference type="GO" id="GO:0043410">
    <property type="term" value="P:positive regulation of MAPK cascade"/>
    <property type="evidence" value="ECO:0000266"/>
    <property type="project" value="RGD"/>
</dbReference>
<dbReference type="GO" id="GO:0001558">
    <property type="term" value="P:regulation of cell growth"/>
    <property type="evidence" value="ECO:0000266"/>
    <property type="project" value="RGD"/>
</dbReference>
<dbReference type="GO" id="GO:0010906">
    <property type="term" value="P:regulation of glucose metabolic process"/>
    <property type="evidence" value="ECO:0000266"/>
    <property type="project" value="RGD"/>
</dbReference>
<dbReference type="GO" id="GO:0040008">
    <property type="term" value="P:regulation of growth"/>
    <property type="evidence" value="ECO:0000266"/>
    <property type="project" value="RGD"/>
</dbReference>
<dbReference type="GO" id="GO:0043567">
    <property type="term" value="P:regulation of insulin-like growth factor receptor signaling pathway"/>
    <property type="evidence" value="ECO:0000318"/>
    <property type="project" value="GO_Central"/>
</dbReference>
<dbReference type="GO" id="GO:0044342">
    <property type="term" value="P:type B pancreatic cell proliferation"/>
    <property type="evidence" value="ECO:0000266"/>
    <property type="project" value="RGD"/>
</dbReference>
<dbReference type="CDD" id="cd00191">
    <property type="entry name" value="TY"/>
    <property type="match status" value="1"/>
</dbReference>
<dbReference type="FunFam" id="4.10.40.20:FF:000001">
    <property type="entry name" value="Insulin-like growth factor binding protein 5"/>
    <property type="match status" value="1"/>
</dbReference>
<dbReference type="FunFam" id="4.10.800.10:FF:000002">
    <property type="entry name" value="Insulin-like growth factor-binding protein 2"/>
    <property type="match status" value="1"/>
</dbReference>
<dbReference type="Gene3D" id="4.10.40.20">
    <property type="match status" value="1"/>
</dbReference>
<dbReference type="Gene3D" id="4.10.800.10">
    <property type="entry name" value="Thyroglobulin type-1"/>
    <property type="match status" value="1"/>
</dbReference>
<dbReference type="InterPro" id="IPR009030">
    <property type="entry name" value="Growth_fac_rcpt_cys_sf"/>
</dbReference>
<dbReference type="InterPro" id="IPR022327">
    <property type="entry name" value="IGFBP-4"/>
</dbReference>
<dbReference type="InterPro" id="IPR000867">
    <property type="entry name" value="IGFBP-like"/>
</dbReference>
<dbReference type="InterPro" id="IPR022321">
    <property type="entry name" value="IGFBP_1-6_chordata"/>
</dbReference>
<dbReference type="InterPro" id="IPR017891">
    <property type="entry name" value="Insulin_GF-bd_Cys-rich_CS"/>
</dbReference>
<dbReference type="InterPro" id="IPR000716">
    <property type="entry name" value="Thyroglobulin_1"/>
</dbReference>
<dbReference type="InterPro" id="IPR036857">
    <property type="entry name" value="Thyroglobulin_1_sf"/>
</dbReference>
<dbReference type="PANTHER" id="PTHR11551">
    <property type="entry name" value="INSULIN-LIKE GROWTH FACTOR BINDING PROTEIN"/>
    <property type="match status" value="1"/>
</dbReference>
<dbReference type="PANTHER" id="PTHR11551:SF7">
    <property type="entry name" value="INSULIN-LIKE GROWTH FACTOR-BINDING PROTEIN 4"/>
    <property type="match status" value="1"/>
</dbReference>
<dbReference type="Pfam" id="PF00219">
    <property type="entry name" value="IGFBP"/>
    <property type="match status" value="1"/>
</dbReference>
<dbReference type="Pfam" id="PF00086">
    <property type="entry name" value="Thyroglobulin_1"/>
    <property type="match status" value="1"/>
</dbReference>
<dbReference type="PRINTS" id="PR01976">
    <property type="entry name" value="IGFBPFAMILY"/>
</dbReference>
<dbReference type="PRINTS" id="PR01980">
    <property type="entry name" value="IGFBPFAMILY4"/>
</dbReference>
<dbReference type="SMART" id="SM00121">
    <property type="entry name" value="IB"/>
    <property type="match status" value="1"/>
</dbReference>
<dbReference type="SMART" id="SM00211">
    <property type="entry name" value="TY"/>
    <property type="match status" value="1"/>
</dbReference>
<dbReference type="SUPFAM" id="SSF57184">
    <property type="entry name" value="Growth factor receptor domain"/>
    <property type="match status" value="1"/>
</dbReference>
<dbReference type="SUPFAM" id="SSF57610">
    <property type="entry name" value="Thyroglobulin type-1 domain"/>
    <property type="match status" value="1"/>
</dbReference>
<dbReference type="PROSITE" id="PS00222">
    <property type="entry name" value="IGFBP_N_1"/>
    <property type="match status" value="1"/>
</dbReference>
<dbReference type="PROSITE" id="PS51323">
    <property type="entry name" value="IGFBP_N_2"/>
    <property type="match status" value="1"/>
</dbReference>
<dbReference type="PROSITE" id="PS00484">
    <property type="entry name" value="THYROGLOBULIN_1_1"/>
    <property type="match status" value="1"/>
</dbReference>
<dbReference type="PROSITE" id="PS51162">
    <property type="entry name" value="THYROGLOBULIN_1_2"/>
    <property type="match status" value="1"/>
</dbReference>
<protein>
    <recommendedName>
        <fullName>Insulin-like growth factor-binding protein 4</fullName>
        <shortName>IBP-4</shortName>
        <shortName>IGF-binding protein 4</shortName>
        <shortName>IGFBP-4</shortName>
    </recommendedName>
</protein>
<name>IBP4_RAT</name>
<proteinExistence type="evidence at protein level"/>